<name>EIF1B_MACFA</name>
<reference key="1">
    <citation type="submission" date="2005-06" db="EMBL/GenBank/DDBJ databases">
        <title>DNA sequences of macaque genes expressed in brain or testis and its evolutionary implications.</title>
        <authorList>
            <consortium name="International consortium for macaque cDNA sequencing and analysis"/>
        </authorList>
    </citation>
    <scope>NUCLEOTIDE SEQUENCE [LARGE SCALE MRNA]</scope>
    <source>
        <tissue>Temporal cortex</tissue>
    </source>
</reference>
<gene>
    <name type="primary">EIF1B</name>
    <name type="ORF">QtrA-11743</name>
</gene>
<evidence type="ECO:0000250" key="1">
    <source>
        <dbReference type="UniProtKB" id="O60739"/>
    </source>
</evidence>
<evidence type="ECO:0000305" key="2"/>
<organism>
    <name type="scientific">Macaca fascicularis</name>
    <name type="common">Crab-eating macaque</name>
    <name type="synonym">Cynomolgus monkey</name>
    <dbReference type="NCBI Taxonomy" id="9541"/>
    <lineage>
        <taxon>Eukaryota</taxon>
        <taxon>Metazoa</taxon>
        <taxon>Chordata</taxon>
        <taxon>Craniata</taxon>
        <taxon>Vertebrata</taxon>
        <taxon>Euteleostomi</taxon>
        <taxon>Mammalia</taxon>
        <taxon>Eutheria</taxon>
        <taxon>Euarchontoglires</taxon>
        <taxon>Primates</taxon>
        <taxon>Haplorrhini</taxon>
        <taxon>Catarrhini</taxon>
        <taxon>Cercopithecidae</taxon>
        <taxon>Cercopithecinae</taxon>
        <taxon>Macaca</taxon>
    </lineage>
</organism>
<dbReference type="EMBL" id="AB169765">
    <property type="protein sequence ID" value="BAE01846.1"/>
    <property type="molecule type" value="mRNA"/>
</dbReference>
<dbReference type="RefSeq" id="NP_001274250.1">
    <property type="nucleotide sequence ID" value="NM_001287321.1"/>
</dbReference>
<dbReference type="RefSeq" id="XP_045240967.1">
    <property type="nucleotide sequence ID" value="XM_045385032.2"/>
</dbReference>
<dbReference type="SMR" id="Q4R4X9"/>
<dbReference type="STRING" id="9541.ENSMFAP00000000785"/>
<dbReference type="Ensembl" id="ENSMFAT00000028958.2">
    <property type="protein sequence ID" value="ENSMFAP00000000785.1"/>
    <property type="gene ID" value="ENSMFAG00000037264.2"/>
</dbReference>
<dbReference type="GeneID" id="102137694"/>
<dbReference type="VEuPathDB" id="HostDB:ENSMFAG00000037264"/>
<dbReference type="eggNOG" id="KOG1770">
    <property type="taxonomic scope" value="Eukaryota"/>
</dbReference>
<dbReference type="GeneTree" id="ENSGT00940000160239"/>
<dbReference type="OMA" id="CEFMITQ"/>
<dbReference type="Proteomes" id="UP000233100">
    <property type="component" value="Chromosome 2"/>
</dbReference>
<dbReference type="Bgee" id="ENSMFAG00000037264">
    <property type="expression patterns" value="Expressed in heart and 13 other cell types or tissues"/>
</dbReference>
<dbReference type="GO" id="GO:0003743">
    <property type="term" value="F:translation initiation factor activity"/>
    <property type="evidence" value="ECO:0007669"/>
    <property type="project" value="UniProtKB-KW"/>
</dbReference>
<dbReference type="CDD" id="cd11566">
    <property type="entry name" value="eIF1_SUI1"/>
    <property type="match status" value="1"/>
</dbReference>
<dbReference type="FunFam" id="3.30.780.10:FF:000003">
    <property type="entry name" value="Eukaryotic translation initiation factor 1b"/>
    <property type="match status" value="1"/>
</dbReference>
<dbReference type="Gene3D" id="3.30.780.10">
    <property type="entry name" value="SUI1-like domain"/>
    <property type="match status" value="1"/>
</dbReference>
<dbReference type="InterPro" id="IPR001950">
    <property type="entry name" value="SUI1"/>
</dbReference>
<dbReference type="InterPro" id="IPR036877">
    <property type="entry name" value="SUI1_dom_sf"/>
</dbReference>
<dbReference type="InterPro" id="IPR005874">
    <property type="entry name" value="SUI1_euk"/>
</dbReference>
<dbReference type="NCBIfam" id="TIGR01160">
    <property type="entry name" value="SUI1_MOF2"/>
    <property type="match status" value="1"/>
</dbReference>
<dbReference type="PANTHER" id="PTHR10388">
    <property type="entry name" value="EUKARYOTIC TRANSLATION INITIATION FACTOR SUI1"/>
    <property type="match status" value="1"/>
</dbReference>
<dbReference type="Pfam" id="PF01253">
    <property type="entry name" value="SUI1"/>
    <property type="match status" value="1"/>
</dbReference>
<dbReference type="PIRSF" id="PIRSF004499">
    <property type="entry name" value="SUI1_euk"/>
    <property type="match status" value="1"/>
</dbReference>
<dbReference type="SUPFAM" id="SSF55159">
    <property type="entry name" value="eIF1-like"/>
    <property type="match status" value="1"/>
</dbReference>
<dbReference type="PROSITE" id="PS50296">
    <property type="entry name" value="SUI1"/>
    <property type="match status" value="1"/>
</dbReference>
<accession>Q4R4X9</accession>
<protein>
    <recommendedName>
        <fullName>Eukaryotic translation initiation factor 1b</fullName>
        <shortName>eIF1b</shortName>
    </recommendedName>
</protein>
<proteinExistence type="inferred from homology"/>
<comment type="function">
    <text>Probably involved in translation.</text>
</comment>
<comment type="similarity">
    <text evidence="2">Belongs to the SUI1 family.</text>
</comment>
<feature type="initiator methionine" description="Removed" evidence="1">
    <location>
        <position position="1"/>
    </location>
</feature>
<feature type="chain" id="PRO_0000130560" description="Eukaryotic translation initiation factor 1b">
    <location>
        <begin position="2"/>
        <end position="113"/>
    </location>
</feature>
<feature type="modified residue" description="N-acetylserine" evidence="1">
    <location>
        <position position="2"/>
    </location>
</feature>
<feature type="modified residue" description="Phosphoserine" evidence="1">
    <location>
        <position position="9"/>
    </location>
</feature>
<sequence length="113" mass="12824">MSTIQNLQSFDPFADATKGDDLLPAGTEDYIHIRIQQRNGRKTLTTVQGIADDYDKKKLVKAFKKKFACNGTVIEHPEYGEVIQLQGDQRKNICQFLLEVGIVKEEQLKVHGF</sequence>
<keyword id="KW-0007">Acetylation</keyword>
<keyword id="KW-0396">Initiation factor</keyword>
<keyword id="KW-0597">Phosphoprotein</keyword>
<keyword id="KW-0648">Protein biosynthesis</keyword>
<keyword id="KW-1185">Reference proteome</keyword>